<sequence length="276" mass="31654">MPELPEVENVRRTLENLVTGKTIEDVIVTYPKIVKRPDDAEIFKEMLKGETIENIKRRGKFLLLYVTNYVIVSHLRMEGKFLLHQEDEPIDKHTHVRFLFTDGTELHYKDVRKFGTMHLFKKGEEMNQMPLADLGPEPFDAELTPQYLHERLQKTNRKIKVVLLDQRLLVGLGNIYVDEVLFRSQIHPEREASSLTAEEIERIYEATVTTLGEAVKRGGSTIRTYINSQGQIGSFQELLNVYGKKGEPCVTCGTILEKTVVGGRGTHYCPICQPRI</sequence>
<evidence type="ECO:0000250" key="1"/>
<evidence type="ECO:0000255" key="2">
    <source>
        <dbReference type="HAMAP-Rule" id="MF_00103"/>
    </source>
</evidence>
<name>FPG_BACCZ</name>
<comment type="function">
    <text evidence="2">Involved in base excision repair of DNA damaged by oxidation or by mutagenic agents. Acts as a DNA glycosylase that recognizes and removes damaged bases. Has a preference for oxidized purines, such as 7,8-dihydro-8-oxoguanine (8-oxoG). Has AP (apurinic/apyrimidinic) lyase activity and introduces nicks in the DNA strand. Cleaves the DNA backbone by beta-delta elimination to generate a single-strand break at the site of the removed base with both 3'- and 5'-phosphates.</text>
</comment>
<comment type="catalytic activity">
    <reaction evidence="2">
        <text>Hydrolysis of DNA containing ring-opened 7-methylguanine residues, releasing 2,6-diamino-4-hydroxy-5-(N-methyl)formamidopyrimidine.</text>
        <dbReference type="EC" id="3.2.2.23"/>
    </reaction>
</comment>
<comment type="catalytic activity">
    <reaction evidence="2">
        <text>2'-deoxyribonucleotide-(2'-deoxyribose 5'-phosphate)-2'-deoxyribonucleotide-DNA = a 3'-end 2'-deoxyribonucleotide-(2,3-dehydro-2,3-deoxyribose 5'-phosphate)-DNA + a 5'-end 5'-phospho-2'-deoxyribonucleoside-DNA + H(+)</text>
        <dbReference type="Rhea" id="RHEA:66592"/>
        <dbReference type="Rhea" id="RHEA-COMP:13180"/>
        <dbReference type="Rhea" id="RHEA-COMP:16897"/>
        <dbReference type="Rhea" id="RHEA-COMP:17067"/>
        <dbReference type="ChEBI" id="CHEBI:15378"/>
        <dbReference type="ChEBI" id="CHEBI:136412"/>
        <dbReference type="ChEBI" id="CHEBI:157695"/>
        <dbReference type="ChEBI" id="CHEBI:167181"/>
        <dbReference type="EC" id="4.2.99.18"/>
    </reaction>
</comment>
<comment type="cofactor">
    <cofactor evidence="2">
        <name>Zn(2+)</name>
        <dbReference type="ChEBI" id="CHEBI:29105"/>
    </cofactor>
    <text evidence="2">Binds 1 zinc ion per subunit.</text>
</comment>
<comment type="subunit">
    <text evidence="2">Monomer.</text>
</comment>
<comment type="similarity">
    <text evidence="2">Belongs to the FPG family.</text>
</comment>
<accession>Q633L1</accession>
<keyword id="KW-0227">DNA damage</keyword>
<keyword id="KW-0234">DNA repair</keyword>
<keyword id="KW-0238">DNA-binding</keyword>
<keyword id="KW-0326">Glycosidase</keyword>
<keyword id="KW-0378">Hydrolase</keyword>
<keyword id="KW-0456">Lyase</keyword>
<keyword id="KW-0479">Metal-binding</keyword>
<keyword id="KW-0511">Multifunctional enzyme</keyword>
<keyword id="KW-0862">Zinc</keyword>
<keyword id="KW-0863">Zinc-finger</keyword>
<feature type="initiator methionine" description="Removed" evidence="1">
    <location>
        <position position="1"/>
    </location>
</feature>
<feature type="chain" id="PRO_0000228412" description="Formamidopyrimidine-DNA glycosylase">
    <location>
        <begin position="2"/>
        <end position="276"/>
    </location>
</feature>
<feature type="zinc finger region" description="FPG-type" evidence="2">
    <location>
        <begin position="240"/>
        <end position="274"/>
    </location>
</feature>
<feature type="active site" description="Schiff-base intermediate with DNA" evidence="2">
    <location>
        <position position="2"/>
    </location>
</feature>
<feature type="active site" description="Proton donor" evidence="2">
    <location>
        <position position="3"/>
    </location>
</feature>
<feature type="active site" description="Proton donor; for beta-elimination activity" evidence="2">
    <location>
        <position position="60"/>
    </location>
</feature>
<feature type="active site" description="Proton donor; for delta-elimination activity" evidence="2">
    <location>
        <position position="264"/>
    </location>
</feature>
<feature type="binding site" evidence="2">
    <location>
        <position position="93"/>
    </location>
    <ligand>
        <name>DNA</name>
        <dbReference type="ChEBI" id="CHEBI:16991"/>
    </ligand>
</feature>
<feature type="binding site" evidence="2">
    <location>
        <position position="112"/>
    </location>
    <ligand>
        <name>DNA</name>
        <dbReference type="ChEBI" id="CHEBI:16991"/>
    </ligand>
</feature>
<protein>
    <recommendedName>
        <fullName evidence="2">Formamidopyrimidine-DNA glycosylase</fullName>
        <shortName evidence="2">Fapy-DNA glycosylase</shortName>
        <ecNumber evidence="2">3.2.2.23</ecNumber>
    </recommendedName>
    <alternativeName>
        <fullName evidence="2">DNA-(apurinic or apyrimidinic site) lyase MutM</fullName>
        <shortName evidence="2">AP lyase MutM</shortName>
        <ecNumber evidence="2">4.2.99.18</ecNumber>
    </alternativeName>
</protein>
<organism>
    <name type="scientific">Bacillus cereus (strain ZK / E33L)</name>
    <dbReference type="NCBI Taxonomy" id="288681"/>
    <lineage>
        <taxon>Bacteria</taxon>
        <taxon>Bacillati</taxon>
        <taxon>Bacillota</taxon>
        <taxon>Bacilli</taxon>
        <taxon>Bacillales</taxon>
        <taxon>Bacillaceae</taxon>
        <taxon>Bacillus</taxon>
        <taxon>Bacillus cereus group</taxon>
    </lineage>
</organism>
<dbReference type="EC" id="3.2.2.23" evidence="2"/>
<dbReference type="EC" id="4.2.99.18" evidence="2"/>
<dbReference type="EMBL" id="CP000001">
    <property type="protein sequence ID" value="AAU15943.1"/>
    <property type="molecule type" value="Genomic_DNA"/>
</dbReference>
<dbReference type="RefSeq" id="WP_001114480.1">
    <property type="nucleotide sequence ID" value="NZ_CP009968.1"/>
</dbReference>
<dbReference type="SMR" id="Q633L1"/>
<dbReference type="GeneID" id="45024458"/>
<dbReference type="KEGG" id="bcz:BCE33L4327"/>
<dbReference type="PATRIC" id="fig|288681.22.peg.1046"/>
<dbReference type="Proteomes" id="UP000002612">
    <property type="component" value="Chromosome"/>
</dbReference>
<dbReference type="GO" id="GO:0034039">
    <property type="term" value="F:8-oxo-7,8-dihydroguanine DNA N-glycosylase activity"/>
    <property type="evidence" value="ECO:0007669"/>
    <property type="project" value="TreeGrafter"/>
</dbReference>
<dbReference type="GO" id="GO:0140078">
    <property type="term" value="F:class I DNA-(apurinic or apyrimidinic site) endonuclease activity"/>
    <property type="evidence" value="ECO:0007669"/>
    <property type="project" value="UniProtKB-EC"/>
</dbReference>
<dbReference type="GO" id="GO:0003684">
    <property type="term" value="F:damaged DNA binding"/>
    <property type="evidence" value="ECO:0007669"/>
    <property type="project" value="InterPro"/>
</dbReference>
<dbReference type="GO" id="GO:0008270">
    <property type="term" value="F:zinc ion binding"/>
    <property type="evidence" value="ECO:0007669"/>
    <property type="project" value="UniProtKB-UniRule"/>
</dbReference>
<dbReference type="GO" id="GO:0006284">
    <property type="term" value="P:base-excision repair"/>
    <property type="evidence" value="ECO:0007669"/>
    <property type="project" value="InterPro"/>
</dbReference>
<dbReference type="CDD" id="cd08966">
    <property type="entry name" value="EcFpg-like_N"/>
    <property type="match status" value="1"/>
</dbReference>
<dbReference type="FunFam" id="1.10.8.50:FF:000003">
    <property type="entry name" value="Formamidopyrimidine-DNA glycosylase"/>
    <property type="match status" value="1"/>
</dbReference>
<dbReference type="FunFam" id="3.20.190.10:FF:000001">
    <property type="entry name" value="Formamidopyrimidine-DNA glycosylase"/>
    <property type="match status" value="1"/>
</dbReference>
<dbReference type="Gene3D" id="1.10.8.50">
    <property type="match status" value="1"/>
</dbReference>
<dbReference type="Gene3D" id="3.20.190.10">
    <property type="entry name" value="MutM-like, N-terminal"/>
    <property type="match status" value="1"/>
</dbReference>
<dbReference type="HAMAP" id="MF_00103">
    <property type="entry name" value="Fapy_DNA_glycosyl"/>
    <property type="match status" value="1"/>
</dbReference>
<dbReference type="InterPro" id="IPR015886">
    <property type="entry name" value="DNA_glyclase/AP_lyase_DNA-bd"/>
</dbReference>
<dbReference type="InterPro" id="IPR015887">
    <property type="entry name" value="DNA_glyclase_Znf_dom_DNA_BS"/>
</dbReference>
<dbReference type="InterPro" id="IPR020629">
    <property type="entry name" value="Formamido-pyr_DNA_Glyclase"/>
</dbReference>
<dbReference type="InterPro" id="IPR012319">
    <property type="entry name" value="FPG_cat"/>
</dbReference>
<dbReference type="InterPro" id="IPR035937">
    <property type="entry name" value="MutM-like_N-ter"/>
</dbReference>
<dbReference type="InterPro" id="IPR010979">
    <property type="entry name" value="Ribosomal_uS13-like_H2TH"/>
</dbReference>
<dbReference type="InterPro" id="IPR000214">
    <property type="entry name" value="Znf_DNA_glyclase/AP_lyase"/>
</dbReference>
<dbReference type="InterPro" id="IPR010663">
    <property type="entry name" value="Znf_FPG/IleRS"/>
</dbReference>
<dbReference type="NCBIfam" id="TIGR00577">
    <property type="entry name" value="fpg"/>
    <property type="match status" value="1"/>
</dbReference>
<dbReference type="NCBIfam" id="NF002211">
    <property type="entry name" value="PRK01103.1"/>
    <property type="match status" value="1"/>
</dbReference>
<dbReference type="PANTHER" id="PTHR22993">
    <property type="entry name" value="FORMAMIDOPYRIMIDINE-DNA GLYCOSYLASE"/>
    <property type="match status" value="1"/>
</dbReference>
<dbReference type="PANTHER" id="PTHR22993:SF9">
    <property type="entry name" value="FORMAMIDOPYRIMIDINE-DNA GLYCOSYLASE"/>
    <property type="match status" value="1"/>
</dbReference>
<dbReference type="Pfam" id="PF01149">
    <property type="entry name" value="Fapy_DNA_glyco"/>
    <property type="match status" value="1"/>
</dbReference>
<dbReference type="Pfam" id="PF06831">
    <property type="entry name" value="H2TH"/>
    <property type="match status" value="1"/>
</dbReference>
<dbReference type="Pfam" id="PF06827">
    <property type="entry name" value="zf-FPG_IleRS"/>
    <property type="match status" value="1"/>
</dbReference>
<dbReference type="SMART" id="SM00898">
    <property type="entry name" value="Fapy_DNA_glyco"/>
    <property type="match status" value="1"/>
</dbReference>
<dbReference type="SMART" id="SM01232">
    <property type="entry name" value="H2TH"/>
    <property type="match status" value="1"/>
</dbReference>
<dbReference type="SUPFAM" id="SSF57716">
    <property type="entry name" value="Glucocorticoid receptor-like (DNA-binding domain)"/>
    <property type="match status" value="1"/>
</dbReference>
<dbReference type="SUPFAM" id="SSF81624">
    <property type="entry name" value="N-terminal domain of MutM-like DNA repair proteins"/>
    <property type="match status" value="1"/>
</dbReference>
<dbReference type="SUPFAM" id="SSF46946">
    <property type="entry name" value="S13-like H2TH domain"/>
    <property type="match status" value="1"/>
</dbReference>
<dbReference type="PROSITE" id="PS51068">
    <property type="entry name" value="FPG_CAT"/>
    <property type="match status" value="1"/>
</dbReference>
<dbReference type="PROSITE" id="PS01242">
    <property type="entry name" value="ZF_FPG_1"/>
    <property type="match status" value="1"/>
</dbReference>
<dbReference type="PROSITE" id="PS51066">
    <property type="entry name" value="ZF_FPG_2"/>
    <property type="match status" value="1"/>
</dbReference>
<proteinExistence type="inferred from homology"/>
<gene>
    <name evidence="2" type="primary">mutM</name>
    <name evidence="2" type="synonym">fpg</name>
    <name type="ordered locus">BCE33L4327</name>
</gene>
<reference key="1">
    <citation type="journal article" date="2006" name="J. Bacteriol.">
        <title>Pathogenomic sequence analysis of Bacillus cereus and Bacillus thuringiensis isolates closely related to Bacillus anthracis.</title>
        <authorList>
            <person name="Han C.S."/>
            <person name="Xie G."/>
            <person name="Challacombe J.F."/>
            <person name="Altherr M.R."/>
            <person name="Bhotika S.S."/>
            <person name="Bruce D."/>
            <person name="Campbell C.S."/>
            <person name="Campbell M.L."/>
            <person name="Chen J."/>
            <person name="Chertkov O."/>
            <person name="Cleland C."/>
            <person name="Dimitrijevic M."/>
            <person name="Doggett N.A."/>
            <person name="Fawcett J.J."/>
            <person name="Glavina T."/>
            <person name="Goodwin L.A."/>
            <person name="Hill K.K."/>
            <person name="Hitchcock P."/>
            <person name="Jackson P.J."/>
            <person name="Keim P."/>
            <person name="Kewalramani A.R."/>
            <person name="Longmire J."/>
            <person name="Lucas S."/>
            <person name="Malfatti S."/>
            <person name="McMurry K."/>
            <person name="Meincke L.J."/>
            <person name="Misra M."/>
            <person name="Moseman B.L."/>
            <person name="Mundt M."/>
            <person name="Munk A.C."/>
            <person name="Okinaka R.T."/>
            <person name="Parson-Quintana B."/>
            <person name="Reilly L.P."/>
            <person name="Richardson P."/>
            <person name="Robinson D.L."/>
            <person name="Rubin E."/>
            <person name="Saunders E."/>
            <person name="Tapia R."/>
            <person name="Tesmer J.G."/>
            <person name="Thayer N."/>
            <person name="Thompson L.S."/>
            <person name="Tice H."/>
            <person name="Ticknor L.O."/>
            <person name="Wills P.L."/>
            <person name="Brettin T.S."/>
            <person name="Gilna P."/>
        </authorList>
    </citation>
    <scope>NUCLEOTIDE SEQUENCE [LARGE SCALE GENOMIC DNA]</scope>
    <source>
        <strain>ZK / E33L</strain>
    </source>
</reference>